<dbReference type="EC" id="6.3.5.2" evidence="1"/>
<dbReference type="EMBL" id="CP000099">
    <property type="protein sequence ID" value="AAZ69892.1"/>
    <property type="molecule type" value="Genomic_DNA"/>
</dbReference>
<dbReference type="SMR" id="Q46E00"/>
<dbReference type="STRING" id="269797.Mbar_A0919"/>
<dbReference type="MEROPS" id="C26.A31"/>
<dbReference type="PaxDb" id="269797-Mbar_A0919"/>
<dbReference type="KEGG" id="mba:Mbar_A0919"/>
<dbReference type="eggNOG" id="arCOG00087">
    <property type="taxonomic scope" value="Archaea"/>
</dbReference>
<dbReference type="HOGENOM" id="CLU_014340_1_4_2"/>
<dbReference type="OrthoDB" id="10772at2157"/>
<dbReference type="UniPathway" id="UPA00189">
    <property type="reaction ID" value="UER00296"/>
</dbReference>
<dbReference type="GO" id="GO:0005829">
    <property type="term" value="C:cytosol"/>
    <property type="evidence" value="ECO:0007669"/>
    <property type="project" value="TreeGrafter"/>
</dbReference>
<dbReference type="GO" id="GO:0005524">
    <property type="term" value="F:ATP binding"/>
    <property type="evidence" value="ECO:0007669"/>
    <property type="project" value="UniProtKB-KW"/>
</dbReference>
<dbReference type="GO" id="GO:0003921">
    <property type="term" value="F:GMP synthase activity"/>
    <property type="evidence" value="ECO:0007669"/>
    <property type="project" value="TreeGrafter"/>
</dbReference>
<dbReference type="CDD" id="cd01742">
    <property type="entry name" value="GATase1_GMP_Synthase"/>
    <property type="match status" value="1"/>
</dbReference>
<dbReference type="FunFam" id="3.40.50.880:FF:000047">
    <property type="entry name" value="GMP synthase [glutamine-hydrolyzing] subunit A"/>
    <property type="match status" value="1"/>
</dbReference>
<dbReference type="Gene3D" id="3.40.50.880">
    <property type="match status" value="1"/>
</dbReference>
<dbReference type="HAMAP" id="MF_01510">
    <property type="entry name" value="GMP_synthase_A"/>
    <property type="match status" value="1"/>
</dbReference>
<dbReference type="InterPro" id="IPR029062">
    <property type="entry name" value="Class_I_gatase-like"/>
</dbReference>
<dbReference type="InterPro" id="IPR017926">
    <property type="entry name" value="GATASE"/>
</dbReference>
<dbReference type="InterPro" id="IPR004739">
    <property type="entry name" value="GMP_synth_GATase"/>
</dbReference>
<dbReference type="InterPro" id="IPR023686">
    <property type="entry name" value="GMP_synthase_A"/>
</dbReference>
<dbReference type="NCBIfam" id="TIGR00888">
    <property type="entry name" value="guaA_Nterm"/>
    <property type="match status" value="1"/>
</dbReference>
<dbReference type="NCBIfam" id="NF001975">
    <property type="entry name" value="PRK00758.1"/>
    <property type="match status" value="1"/>
</dbReference>
<dbReference type="PANTHER" id="PTHR11922:SF2">
    <property type="entry name" value="GMP SYNTHASE [GLUTAMINE-HYDROLYZING]"/>
    <property type="match status" value="1"/>
</dbReference>
<dbReference type="PANTHER" id="PTHR11922">
    <property type="entry name" value="GMP SYNTHASE-RELATED"/>
    <property type="match status" value="1"/>
</dbReference>
<dbReference type="Pfam" id="PF00117">
    <property type="entry name" value="GATase"/>
    <property type="match status" value="1"/>
</dbReference>
<dbReference type="PRINTS" id="PR00097">
    <property type="entry name" value="ANTSNTHASEII"/>
</dbReference>
<dbReference type="PRINTS" id="PR00096">
    <property type="entry name" value="GATASE"/>
</dbReference>
<dbReference type="SUPFAM" id="SSF52317">
    <property type="entry name" value="Class I glutamine amidotransferase-like"/>
    <property type="match status" value="1"/>
</dbReference>
<dbReference type="PROSITE" id="PS51273">
    <property type="entry name" value="GATASE_TYPE_1"/>
    <property type="match status" value="1"/>
</dbReference>
<organism>
    <name type="scientific">Methanosarcina barkeri (strain Fusaro / DSM 804)</name>
    <dbReference type="NCBI Taxonomy" id="269797"/>
    <lineage>
        <taxon>Archaea</taxon>
        <taxon>Methanobacteriati</taxon>
        <taxon>Methanobacteriota</taxon>
        <taxon>Stenosarchaea group</taxon>
        <taxon>Methanomicrobia</taxon>
        <taxon>Methanosarcinales</taxon>
        <taxon>Methanosarcinaceae</taxon>
        <taxon>Methanosarcina</taxon>
    </lineage>
</organism>
<evidence type="ECO:0000255" key="1">
    <source>
        <dbReference type="HAMAP-Rule" id="MF_01510"/>
    </source>
</evidence>
<name>GUAAA_METBF</name>
<comment type="function">
    <text evidence="1">Catalyzes the synthesis of GMP from XMP.</text>
</comment>
<comment type="catalytic activity">
    <reaction evidence="1">
        <text>XMP + L-glutamine + ATP + H2O = GMP + L-glutamate + AMP + diphosphate + 2 H(+)</text>
        <dbReference type="Rhea" id="RHEA:11680"/>
        <dbReference type="ChEBI" id="CHEBI:15377"/>
        <dbReference type="ChEBI" id="CHEBI:15378"/>
        <dbReference type="ChEBI" id="CHEBI:29985"/>
        <dbReference type="ChEBI" id="CHEBI:30616"/>
        <dbReference type="ChEBI" id="CHEBI:33019"/>
        <dbReference type="ChEBI" id="CHEBI:57464"/>
        <dbReference type="ChEBI" id="CHEBI:58115"/>
        <dbReference type="ChEBI" id="CHEBI:58359"/>
        <dbReference type="ChEBI" id="CHEBI:456215"/>
        <dbReference type="EC" id="6.3.5.2"/>
    </reaction>
</comment>
<comment type="pathway">
    <text evidence="1">Purine metabolism; GMP biosynthesis; GMP from XMP (L-Gln route): step 1/1.</text>
</comment>
<comment type="subunit">
    <text evidence="1">Heterodimer composed of a glutamine amidotransferase subunit (A) and a GMP-binding subunit (B).</text>
</comment>
<sequence>MKELKILVVNNYGQFCHLIHRAVRDLDMDTKIIPNTTPIEDILAEEPDGLILSGGPEMDRAGLCFDYVREIDLPILGICLGHQAIALAYGGHVHSGKKGGYAEVEVEVLEEDDILRGLGPKATVWASHADEVAILPEGFIHLARSDICEIEAMRHPTKPIYGVQWHPEVSHTEKGEELLTNFLEICEKY</sequence>
<feature type="chain" id="PRO_0000292196" description="GMP synthase [glutamine-hydrolyzing] subunit A">
    <location>
        <begin position="1"/>
        <end position="189"/>
    </location>
</feature>
<feature type="domain" description="Glutamine amidotransferase type-1" evidence="1">
    <location>
        <begin position="5"/>
        <end position="189"/>
    </location>
</feature>
<feature type="active site" description="Nucleophile" evidence="1">
    <location>
        <position position="79"/>
    </location>
</feature>
<feature type="active site" evidence="1">
    <location>
        <position position="166"/>
    </location>
</feature>
<feature type="active site" evidence="1">
    <location>
        <position position="168"/>
    </location>
</feature>
<accession>Q46E00</accession>
<gene>
    <name evidence="1" type="primary">guaAA</name>
    <name type="ordered locus">Mbar_A0919</name>
</gene>
<proteinExistence type="inferred from homology"/>
<reference key="1">
    <citation type="journal article" date="2006" name="J. Bacteriol.">
        <title>The Methanosarcina barkeri genome: comparative analysis with Methanosarcina acetivorans and Methanosarcina mazei reveals extensive rearrangement within methanosarcinal genomes.</title>
        <authorList>
            <person name="Maeder D.L."/>
            <person name="Anderson I."/>
            <person name="Brettin T.S."/>
            <person name="Bruce D.C."/>
            <person name="Gilna P."/>
            <person name="Han C.S."/>
            <person name="Lapidus A."/>
            <person name="Metcalf W.W."/>
            <person name="Saunders E."/>
            <person name="Tapia R."/>
            <person name="Sowers K.R."/>
        </authorList>
    </citation>
    <scope>NUCLEOTIDE SEQUENCE [LARGE SCALE GENOMIC DNA]</scope>
    <source>
        <strain>Fusaro / DSM 804</strain>
    </source>
</reference>
<protein>
    <recommendedName>
        <fullName evidence="1">GMP synthase [glutamine-hydrolyzing] subunit A</fullName>
        <ecNumber evidence="1">6.3.5.2</ecNumber>
    </recommendedName>
    <alternativeName>
        <fullName evidence="1">Glutamine amidotransferase</fullName>
    </alternativeName>
</protein>
<keyword id="KW-0067">ATP-binding</keyword>
<keyword id="KW-0315">Glutamine amidotransferase</keyword>
<keyword id="KW-0332">GMP biosynthesis</keyword>
<keyword id="KW-0436">Ligase</keyword>
<keyword id="KW-0547">Nucleotide-binding</keyword>
<keyword id="KW-0658">Purine biosynthesis</keyword>